<proteinExistence type="evidence at protein level"/>
<reference key="1">
    <citation type="journal article" date="1999" name="Biochem. Biophys. Res. Commun.">
        <title>TIP120B: a novel TIP120-family protein that is expressed specifically in muscle tissues.</title>
        <authorList>
            <person name="Aoki T."/>
            <person name="Okada N."/>
            <person name="Ishida M."/>
            <person name="Yogosawa S."/>
            <person name="Makino Y."/>
            <person name="Tamura T.-A."/>
        </authorList>
    </citation>
    <scope>NUCLEOTIDE SEQUENCE [MRNA] (ISOFORMS 1; 2 AND 3)</scope>
    <source>
        <tissue>Skeletal muscle</tissue>
    </source>
</reference>
<reference key="2">
    <citation type="journal article" date="2003" name="J. Biol. Chem.">
        <title>Proteolytic targeting of transcriptional regulator TIP120B by a HECT domain E3 ligase.</title>
        <authorList>
            <person name="You J."/>
            <person name="Wang M."/>
            <person name="Aoki T."/>
            <person name="Tamura T.-A."/>
            <person name="Pickart C.M."/>
        </authorList>
    </citation>
    <scope>INTERACTION WITH UBE3C</scope>
    <scope>UBIQUITINATION AND PROTEOLYTIC DEGRADATION</scope>
</reference>
<organism>
    <name type="scientific">Rattus norvegicus</name>
    <name type="common">Rat</name>
    <dbReference type="NCBI Taxonomy" id="10116"/>
    <lineage>
        <taxon>Eukaryota</taxon>
        <taxon>Metazoa</taxon>
        <taxon>Chordata</taxon>
        <taxon>Craniata</taxon>
        <taxon>Vertebrata</taxon>
        <taxon>Euteleostomi</taxon>
        <taxon>Mammalia</taxon>
        <taxon>Eutheria</taxon>
        <taxon>Euarchontoglires</taxon>
        <taxon>Glires</taxon>
        <taxon>Rodentia</taxon>
        <taxon>Myomorpha</taxon>
        <taxon>Muroidea</taxon>
        <taxon>Muridae</taxon>
        <taxon>Murinae</taxon>
        <taxon>Rattus</taxon>
    </lineage>
</organism>
<feature type="initiator methionine" description="Removed" evidence="2">
    <location>
        <position position="1"/>
    </location>
</feature>
<feature type="chain" id="PRO_0000089299" description="Cullin-associated NEDD8-dissociated protein 2">
    <location>
        <begin position="2"/>
        <end position="1273"/>
    </location>
</feature>
<feature type="repeat" description="HEAT 1">
    <location>
        <begin position="2"/>
        <end position="36"/>
    </location>
</feature>
<feature type="repeat" description="HEAT 2">
    <location>
        <begin position="37"/>
        <end position="74"/>
    </location>
</feature>
<feature type="repeat" description="HEAT 3">
    <location>
        <begin position="82"/>
        <end position="119"/>
    </location>
</feature>
<feature type="repeat" description="HEAT 4">
    <location>
        <begin position="121"/>
        <end position="157"/>
    </location>
</feature>
<feature type="repeat" description="HEAT 5">
    <location>
        <begin position="167"/>
        <end position="205"/>
    </location>
</feature>
<feature type="repeat" description="HEAT 6">
    <location>
        <begin position="209"/>
        <end position="246"/>
    </location>
</feature>
<feature type="repeat" description="HEAT 7">
    <location>
        <begin position="248"/>
        <end position="284"/>
    </location>
</feature>
<feature type="repeat" description="HEAT 8">
    <location>
        <begin position="292"/>
        <end position="329"/>
    </location>
</feature>
<feature type="repeat" description="HEAT 9">
    <location>
        <begin position="364"/>
        <end position="405"/>
    </location>
</feature>
<feature type="repeat" description="HEAT 10">
    <location>
        <begin position="409"/>
        <end position="446"/>
    </location>
</feature>
<feature type="repeat" description="HEAT 11">
    <location>
        <begin position="469"/>
        <end position="506"/>
    </location>
</feature>
<feature type="repeat" description="HEAT 12">
    <location>
        <begin position="554"/>
        <end position="591"/>
    </location>
</feature>
<feature type="repeat" description="HEAT 13">
    <location>
        <begin position="602"/>
        <end position="641"/>
    </location>
</feature>
<feature type="repeat" description="HEAT 14">
    <location>
        <begin position="685"/>
        <end position="722"/>
    </location>
</feature>
<feature type="repeat" description="HEAT 15">
    <location>
        <begin position="727"/>
        <end position="764"/>
    </location>
</feature>
<feature type="repeat" description="HEAT 16">
    <location>
        <begin position="768"/>
        <end position="807"/>
    </location>
</feature>
<feature type="repeat" description="HEAT 17">
    <location>
        <begin position="809"/>
        <end position="850"/>
    </location>
</feature>
<feature type="repeat" description="HEAT 18">
    <location>
        <begin position="894"/>
        <end position="931"/>
    </location>
</feature>
<feature type="repeat" description="HEAT 19">
    <location>
        <begin position="933"/>
        <end position="968"/>
    </location>
</feature>
<feature type="repeat" description="HEAT 20">
    <location>
        <begin position="970"/>
        <end position="1003"/>
    </location>
</feature>
<feature type="repeat" description="HEAT 21">
    <location>
        <begin position="1004"/>
        <end position="1040"/>
    </location>
</feature>
<feature type="repeat" description="HEAT 22">
    <location>
        <begin position="1044"/>
        <end position="1081"/>
    </location>
</feature>
<feature type="repeat" description="HEAT 23">
    <location>
        <begin position="1085"/>
        <end position="1121"/>
    </location>
</feature>
<feature type="repeat" description="HEAT 24">
    <location>
        <begin position="1142"/>
        <end position="1178"/>
    </location>
</feature>
<feature type="repeat" description="HEAT 25">
    <location>
        <begin position="1194"/>
        <end position="1231"/>
    </location>
</feature>
<feature type="repeat" description="HEAT 26">
    <location>
        <begin position="1241"/>
        <end position="1273"/>
    </location>
</feature>
<feature type="region of interest" description="Disordered" evidence="3">
    <location>
        <begin position="352"/>
        <end position="383"/>
    </location>
</feature>
<feature type="compositionally biased region" description="Acidic residues" evidence="3">
    <location>
        <begin position="356"/>
        <end position="383"/>
    </location>
</feature>
<feature type="modified residue" description="N-acetylserine" evidence="2">
    <location>
        <position position="2"/>
    </location>
</feature>
<feature type="splice variant" id="VSP_013951" description="In isoform 3." evidence="5">
    <location>
        <begin position="1"/>
        <end position="62"/>
    </location>
</feature>
<feature type="splice variant" id="VSP_013952" description="In isoform 2." evidence="5">
    <location>
        <begin position="23"/>
        <end position="60"/>
    </location>
</feature>
<sequence>MSTGAFYISSLLEKMTSSDKDFSPKSLGGSRVLDPLPWLQILAAITDWISGDRTQDLALPRFMATSDLMSELQKDSIQLDEDSERKVVRTLLRLLEDRSGEVQNLAVKCLGPLVGKVKEYQVENIVDTLCANMRSDKEQLRDIAGIGLKTVLSELPPAATGSGLAISVCRKITGQLTSAIAQQEDVAVQLEALDILSDMLSRLGAPLGTFHASLLHCLLPQLSSPRLAVRKRTVVALGHLAAACSTDLFVELADHLVDRLPGPRAPASPAAIRTLIQCLGSVGRQAGHRLGAHLDRLMPLVEEFCNLDDDELRESCLQAFEAFLRKCPKEMDPHVPNVTSLCLQYMKHDPNYNHDSDEEEQMETEDSEFSEQESEDEYSDDDDMSWKVRRAAAKCMAALISSRPDLLPDFHCTLAPALIRCFKEREENVKADIFGAYIMLLRHTRPPKGWLEAVEEPTQTGRNLNMLRAQVPLVMKALQRQLKDRNVRTRQGCFNLFTELAGVLPGCLAEHMTVLVSGIVFSLADYSSSSTIRMDALAFLQGLLGTEPAEAFHPHLPTLLPPVMACVADPFYKVAAEALLVLQELVRTLWPLDRPRLLDPEPYVGEMSTATLARLRATDLDQEVKERAISCVGHLVGHLGDRLGDDLEPTLLLLLDRLRNEITRLPAVKALTLVAVSPLRLDLQPILAEALPILASFLRKNQRALRLATLAALDALAQSQGLGLPPPAVRSVLAELPALVSENDMHVAQLAVDFLTTVTQTQPASLVEVSGPVLEELLQLLHSPLLPAGVLAATEGFLQALVGTRPPCVEYSELISLLTAPVYNQVGDGGPGLHKQVFHSLARCVAALSAACPQEAAGTASRLVCDARSPHSSTGVKVLAFLSLAEVGQVAGPGPQRELKTVLLEALGSPSEDVRAAAAYALGRVGAGNLPDFLPFLLAQIEAQPRRQYLLLHALREALGAAQPDNLKPYVEDVWALLFQRCESPEEGTRCVVAECIGKLVFVNPPFLLPRFRKQLAAGQPYTRSTVITAVKFLISDQPHSIDPLLKSFIAEFMESLQDPDLNVRRATLTFFNSAVHNKPSLVRDLLDDILPLLYQETKIRRDLIREVEMGPFKHTVDDGLDVRKAAFECMYSLLESCLGQLDICEFLNHVEDGLKDHYDIRMLTFIMLARLAALCPAPVLQRVDRLIEPLRATCTAKVKAGSVKQELEKQDELKRSAMRAVAALMTNPEVRKSPSVADFSTQIRSNPELATLFESIQKDTASGPSMDSMELS</sequence>
<name>CAND2_RAT</name>
<evidence type="ECO:0000250" key="1"/>
<evidence type="ECO:0000250" key="2">
    <source>
        <dbReference type="UniProtKB" id="O75155"/>
    </source>
</evidence>
<evidence type="ECO:0000256" key="3">
    <source>
        <dbReference type="SAM" id="MobiDB-lite"/>
    </source>
</evidence>
<evidence type="ECO:0000269" key="4">
    <source>
    </source>
</evidence>
<evidence type="ECO:0000303" key="5">
    <source>
    </source>
</evidence>
<evidence type="ECO:0000305" key="6"/>
<comment type="function">
    <text evidence="1">Probable assembly factor of SCF (SKP1-CUL1-F-box protein) E3 ubiquitin ligase complexes that promotes the exchange of the substrate-recognition F-box subunit in SCF complexes, thereby playing a key role in the cellular repertoire of SCF complexes.</text>
</comment>
<comment type="subunit">
    <text evidence="1">Binds TBP, CNOT3 and UBE3C.</text>
</comment>
<comment type="subcellular location">
    <subcellularLocation>
        <location>Nucleus</location>
    </subcellularLocation>
</comment>
<comment type="alternative products">
    <event type="alternative splicing"/>
    <isoform>
        <id>Q9R0L4-1</id>
        <name>1</name>
        <sequence type="displayed"/>
    </isoform>
    <isoform>
        <id>Q9R0L4-2</id>
        <name>2</name>
        <sequence type="described" ref="VSP_013952"/>
    </isoform>
    <isoform>
        <id>Q9R0L4-3</id>
        <name>3</name>
        <name>Short form</name>
        <sequence type="described" ref="VSP_013951"/>
    </isoform>
</comment>
<comment type="tissue specificity">
    <text>Detected in heart and skeletal muscle.</text>
</comment>
<comment type="PTM">
    <text evidence="4">Ubiquitinated and targeted for proteasomal degradation.</text>
</comment>
<comment type="similarity">
    <text evidence="6">Belongs to the CAND family.</text>
</comment>
<keyword id="KW-0007">Acetylation</keyword>
<keyword id="KW-0025">Alternative splicing</keyword>
<keyword id="KW-0539">Nucleus</keyword>
<keyword id="KW-1185">Reference proteome</keyword>
<keyword id="KW-0677">Repeat</keyword>
<keyword id="KW-0832">Ubl conjugation</keyword>
<keyword id="KW-0833">Ubl conjugation pathway</keyword>
<protein>
    <recommendedName>
        <fullName>Cullin-associated NEDD8-dissociated protein 2</fullName>
    </recommendedName>
    <alternativeName>
        <fullName>Cullin-associated and neddylation-dissociated protein 2</fullName>
    </alternativeName>
    <alternativeName>
        <fullName>TBP-interacting protein b</fullName>
    </alternativeName>
    <alternativeName>
        <fullName>TBP-interacting protein of 120 kDa B</fullName>
        <shortName>TBP-interacting protein 120B</shortName>
    </alternativeName>
    <alternativeName>
        <fullName>p120 CAND2</fullName>
    </alternativeName>
</protein>
<dbReference type="EMBL" id="AB029324">
    <property type="protein sequence ID" value="BAA83619.1"/>
    <property type="molecule type" value="mRNA"/>
</dbReference>
<dbReference type="EMBL" id="AB029341">
    <property type="protein sequence ID" value="BAA83620.1"/>
    <property type="molecule type" value="mRNA"/>
</dbReference>
<dbReference type="EMBL" id="AB029342">
    <property type="protein sequence ID" value="BAA83621.1"/>
    <property type="molecule type" value="mRNA"/>
</dbReference>
<dbReference type="RefSeq" id="NP_852027.1">
    <property type="nucleotide sequence ID" value="NM_181362.1"/>
</dbReference>
<dbReference type="SMR" id="Q9R0L4"/>
<dbReference type="BioGRID" id="251362">
    <property type="interactions" value="2"/>
</dbReference>
<dbReference type="FunCoup" id="Q9R0L4">
    <property type="interactions" value="1121"/>
</dbReference>
<dbReference type="STRING" id="10116.ENSRNOP00000071689"/>
<dbReference type="PhosphoSitePlus" id="Q9R0L4"/>
<dbReference type="jPOST" id="Q9R0L4"/>
<dbReference type="PaxDb" id="10116-ENSRNOP00000014207"/>
<dbReference type="GeneID" id="192226"/>
<dbReference type="KEGG" id="rno:192226"/>
<dbReference type="UCSC" id="RGD:620480">
    <molecule id="Q9R0L4-1"/>
    <property type="organism name" value="rat"/>
</dbReference>
<dbReference type="AGR" id="RGD:620480"/>
<dbReference type="CTD" id="23066"/>
<dbReference type="RGD" id="620480">
    <property type="gene designation" value="Cand2"/>
</dbReference>
<dbReference type="eggNOG" id="KOG1824">
    <property type="taxonomic scope" value="Eukaryota"/>
</dbReference>
<dbReference type="InParanoid" id="Q9R0L4"/>
<dbReference type="OrthoDB" id="6260732at2759"/>
<dbReference type="PhylomeDB" id="Q9R0L4"/>
<dbReference type="PRO" id="PR:Q9R0L4"/>
<dbReference type="Proteomes" id="UP000002494">
    <property type="component" value="Unplaced"/>
</dbReference>
<dbReference type="GO" id="GO:0005829">
    <property type="term" value="C:cytosol"/>
    <property type="evidence" value="ECO:0000266"/>
    <property type="project" value="RGD"/>
</dbReference>
<dbReference type="GO" id="GO:0005634">
    <property type="term" value="C:nucleus"/>
    <property type="evidence" value="ECO:0000266"/>
    <property type="project" value="RGD"/>
</dbReference>
<dbReference type="GO" id="GO:0017025">
    <property type="term" value="F:TBP-class protein binding"/>
    <property type="evidence" value="ECO:0000314"/>
    <property type="project" value="RGD"/>
</dbReference>
<dbReference type="GO" id="GO:0016567">
    <property type="term" value="P:protein ubiquitination"/>
    <property type="evidence" value="ECO:0000318"/>
    <property type="project" value="GO_Central"/>
</dbReference>
<dbReference type="GO" id="GO:0010265">
    <property type="term" value="P:SCF complex assembly"/>
    <property type="evidence" value="ECO:0000318"/>
    <property type="project" value="GO_Central"/>
</dbReference>
<dbReference type="Gene3D" id="1.25.10.10">
    <property type="entry name" value="Leucine-rich Repeat Variant"/>
    <property type="match status" value="1"/>
</dbReference>
<dbReference type="InterPro" id="IPR011989">
    <property type="entry name" value="ARM-like"/>
</dbReference>
<dbReference type="InterPro" id="IPR016024">
    <property type="entry name" value="ARM-type_fold"/>
</dbReference>
<dbReference type="InterPro" id="IPR039852">
    <property type="entry name" value="CAND1/CAND2"/>
</dbReference>
<dbReference type="InterPro" id="IPR000357">
    <property type="entry name" value="HEAT"/>
</dbReference>
<dbReference type="InterPro" id="IPR013932">
    <property type="entry name" value="TATA-bd_TIP120"/>
</dbReference>
<dbReference type="PANTHER" id="PTHR12696">
    <property type="entry name" value="TIP120"/>
    <property type="match status" value="1"/>
</dbReference>
<dbReference type="Pfam" id="PF02985">
    <property type="entry name" value="HEAT"/>
    <property type="match status" value="1"/>
</dbReference>
<dbReference type="Pfam" id="PF08623">
    <property type="entry name" value="TIP120"/>
    <property type="match status" value="1"/>
</dbReference>
<dbReference type="SUPFAM" id="SSF48371">
    <property type="entry name" value="ARM repeat"/>
    <property type="match status" value="1"/>
</dbReference>
<gene>
    <name type="primary">Cand2</name>
    <name type="synonym">Tip120b</name>
</gene>
<accession>Q9R0L4</accession>
<accession>Q9R0L3</accession>
<accession>Q9R0L5</accession>